<organism>
    <name type="scientific">Mus musculus</name>
    <name type="common">Mouse</name>
    <dbReference type="NCBI Taxonomy" id="10090"/>
    <lineage>
        <taxon>Eukaryota</taxon>
        <taxon>Metazoa</taxon>
        <taxon>Chordata</taxon>
        <taxon>Craniata</taxon>
        <taxon>Vertebrata</taxon>
        <taxon>Euteleostomi</taxon>
        <taxon>Mammalia</taxon>
        <taxon>Eutheria</taxon>
        <taxon>Euarchontoglires</taxon>
        <taxon>Glires</taxon>
        <taxon>Rodentia</taxon>
        <taxon>Myomorpha</taxon>
        <taxon>Muroidea</taxon>
        <taxon>Muridae</taxon>
        <taxon>Murinae</taxon>
        <taxon>Mus</taxon>
        <taxon>Mus</taxon>
    </lineage>
</organism>
<feature type="chain" id="PRO_0000307862" description="Transcription initiation factor TFIID subunit 7-like">
    <location>
        <begin position="1"/>
        <end position="471"/>
    </location>
</feature>
<feature type="region of interest" description="Disordered" evidence="2">
    <location>
        <begin position="1"/>
        <end position="84"/>
    </location>
</feature>
<feature type="region of interest" description="Disordered" evidence="2">
    <location>
        <begin position="192"/>
        <end position="211"/>
    </location>
</feature>
<feature type="region of interest" description="Disordered" evidence="2">
    <location>
        <begin position="328"/>
        <end position="377"/>
    </location>
</feature>
<feature type="coiled-coil region" evidence="1">
    <location>
        <begin position="358"/>
        <end position="433"/>
    </location>
</feature>
<feature type="compositionally biased region" description="Acidic residues" evidence="2">
    <location>
        <begin position="347"/>
        <end position="377"/>
    </location>
</feature>
<feature type="modified residue" description="Phosphoserine" evidence="10">
    <location>
        <position position="199"/>
    </location>
</feature>
<feature type="splice variant" id="VSP_028849" description="In isoform 2." evidence="7 8">
    <location>
        <begin position="1"/>
        <end position="93"/>
    </location>
</feature>
<feature type="mutagenesis site" description="Does not affect interaction with TBP. Knockin mice are fertile." evidence="6">
    <original>D</original>
    <variation>G</variation>
    <location>
        <position position="144"/>
    </location>
</feature>
<feature type="sequence conflict" description="In Ref. 3; BAB30600." evidence="9" ref="3">
    <original>E</original>
    <variation>D</variation>
    <location>
        <position position="15"/>
    </location>
</feature>
<sequence length="471" mass="52905">MERGEEAPTEGAPPEGALVEAKAPVIPEAPATDVSTTEEAGSKEPQVPSGPRPEGAGDTCDTRGARGPPTPGRAKSQKTPRQGTARCQTLESAMRSMSVRLECHDVEEQFILRLPPEQAYAVRKIIHSRNAAWKDKLKIDFSPDGHHAVVQVDNVSLPAKLVNLPCVIGSLKTIDRKTFYKTADVSQMLVCSPEGEPHSPPEEPVVSTGPTVIGISEGKAERKKYNWKHGITPPLKNVRKKRFRKTTKKLPDVKQVDEINFSEYTQSPSVEKEVKRLLYSDAEAVSVRWEVVDDDDAKEIESQGSMPTTPGISQMGGASLSDYDVFREMMGDSGSNSNDVEEKSNEGDDDDDEDEDDEDYGNEKEEEETDNSEEELEKELQAKFNEFSLHEADQDYSSITMAIQKLIFIKEKRLQMIYKKAQRQKELLRKVENLTLKRHFQNVLGKLNIMEKEKCEQIYHLQEQLKCFLKE</sequence>
<name>TAF7L_MOUSE</name>
<gene>
    <name type="primary">Taf7l</name>
    <name type="synonym">Taf2q</name>
</gene>
<comment type="function">
    <text evidence="4">Probably functions as a spermatogenesis-specific component of the DNA-binding general transcription factor complex TFIID, a multimeric protein complex that plays a central role in mediating promoter responses to various activators and repressors. May play a role in spermatogenesis.</text>
</comment>
<comment type="subunit">
    <text evidence="4 6">TFIID is composed of TATA binding protein (TBP) and a number of TBP-associated factors (TAFs). TAF7L may replace TAF7 in a spermatogenesis-specific form of TFIID. Interacts with TBP; the interaction occurs in a sub-population of cells (pachytene and haploid round spermatids) and is developmentally regulated through differential intracellular localization of the two proteins. Interacts with TAF1.</text>
</comment>
<comment type="subcellular location">
    <subcellularLocation>
        <location>Nucleus</location>
    </subcellularLocation>
    <subcellularLocation>
        <location>Cytoplasm</location>
    </subcellularLocation>
    <text>Cytoplasmic in spermatogonia and early spermatocytes (preleptotene, leptotene, and zygotene); translocates into the nuclei of pachytene spermatocytes and round spermatids.</text>
</comment>
<comment type="alternative products">
    <event type="alternative splicing"/>
    <isoform>
        <id>Q9D3R9-1</id>
        <name>1</name>
        <sequence type="displayed"/>
    </isoform>
    <isoform>
        <id>Q9D3R9-2</id>
        <name>2</name>
        <sequence type="described" ref="VSP_028849"/>
    </isoform>
</comment>
<comment type="tissue specificity">
    <text evidence="3 5">Testis-specific (at protein level). Expressed during spermatogenesis from spermatogonia stage up to the stage of round spermatids.</text>
</comment>
<comment type="disruption phenotype">
    <text evidence="5">Reduced sperm count and motility.</text>
</comment>
<comment type="similarity">
    <text evidence="9">Belongs to the TAF7 family.</text>
</comment>
<keyword id="KW-0025">Alternative splicing</keyword>
<keyword id="KW-0175">Coiled coil</keyword>
<keyword id="KW-0963">Cytoplasm</keyword>
<keyword id="KW-0217">Developmental protein</keyword>
<keyword id="KW-0221">Differentiation</keyword>
<keyword id="KW-0903">Direct protein sequencing</keyword>
<keyword id="KW-0539">Nucleus</keyword>
<keyword id="KW-0597">Phosphoprotein</keyword>
<keyword id="KW-1185">Reference proteome</keyword>
<keyword id="KW-0744">Spermatogenesis</keyword>
<keyword id="KW-0804">Transcription</keyword>
<keyword id="KW-0805">Transcription regulation</keyword>
<protein>
    <recommendedName>
        <fullName>Transcription initiation factor TFIID subunit 7-like</fullName>
    </recommendedName>
    <alternativeName>
        <fullName>TATA box binding protein-associated factor RNA polymerase II subunit Q</fullName>
    </alternativeName>
    <alternativeName>
        <fullName>TATA box-binding protein-associated factor 50 kDa</fullName>
    </alternativeName>
    <alternativeName>
        <fullName>Transcription initiation factor TFIID 50 kDa subunit</fullName>
    </alternativeName>
</protein>
<reference key="1">
    <citation type="journal article" date="2001" name="Nat. Genet.">
        <title>An abundance of X-linked genes expressed in spermatogonia.</title>
        <authorList>
            <person name="Wang P.J."/>
            <person name="McCarrey J.R."/>
            <person name="Yang F."/>
            <person name="Page D.C."/>
        </authorList>
    </citation>
    <scope>NUCLEOTIDE SEQUENCE [MRNA] (ISOFORM 2)</scope>
    <scope>TISSUE SPECIFICITY</scope>
    <source>
        <tissue>Testis</tissue>
    </source>
</reference>
<reference key="2">
    <citation type="journal article" date="2003" name="J. Cell Sci.">
        <title>The intracellular localisation of TAF7L, a paralogue of transcription factor TFIID subunit TAF7, is developmentally regulated during male germ-cell differentiation.</title>
        <authorList>
            <person name="Pointud J.-C."/>
            <person name="Mengus G."/>
            <person name="Brancorsini S."/>
            <person name="Monaco L."/>
            <person name="Parvinen M."/>
            <person name="Sassone-Corsi P."/>
            <person name="Davidson I."/>
        </authorList>
    </citation>
    <scope>NUCLEOTIDE SEQUENCE [MRNA] (ISOFORM 1)</scope>
    <scope>PROTEIN SEQUENCE OF 247-262</scope>
    <scope>FUNCTION</scope>
    <scope>INTERACTION WITH TBP AND TAF1</scope>
</reference>
<reference key="3">
    <citation type="journal article" date="2005" name="Science">
        <title>The transcriptional landscape of the mammalian genome.</title>
        <authorList>
            <person name="Carninci P."/>
            <person name="Kasukawa T."/>
            <person name="Katayama S."/>
            <person name="Gough J."/>
            <person name="Frith M.C."/>
            <person name="Maeda N."/>
            <person name="Oyama R."/>
            <person name="Ravasi T."/>
            <person name="Lenhard B."/>
            <person name="Wells C."/>
            <person name="Kodzius R."/>
            <person name="Shimokawa K."/>
            <person name="Bajic V.B."/>
            <person name="Brenner S.E."/>
            <person name="Batalov S."/>
            <person name="Forrest A.R."/>
            <person name="Zavolan M."/>
            <person name="Davis M.J."/>
            <person name="Wilming L.G."/>
            <person name="Aidinis V."/>
            <person name="Allen J.E."/>
            <person name="Ambesi-Impiombato A."/>
            <person name="Apweiler R."/>
            <person name="Aturaliya R.N."/>
            <person name="Bailey T.L."/>
            <person name="Bansal M."/>
            <person name="Baxter L."/>
            <person name="Beisel K.W."/>
            <person name="Bersano T."/>
            <person name="Bono H."/>
            <person name="Chalk A.M."/>
            <person name="Chiu K.P."/>
            <person name="Choudhary V."/>
            <person name="Christoffels A."/>
            <person name="Clutterbuck D.R."/>
            <person name="Crowe M.L."/>
            <person name="Dalla E."/>
            <person name="Dalrymple B.P."/>
            <person name="de Bono B."/>
            <person name="Della Gatta G."/>
            <person name="di Bernardo D."/>
            <person name="Down T."/>
            <person name="Engstrom P."/>
            <person name="Fagiolini M."/>
            <person name="Faulkner G."/>
            <person name="Fletcher C.F."/>
            <person name="Fukushima T."/>
            <person name="Furuno M."/>
            <person name="Futaki S."/>
            <person name="Gariboldi M."/>
            <person name="Georgii-Hemming P."/>
            <person name="Gingeras T.R."/>
            <person name="Gojobori T."/>
            <person name="Green R.E."/>
            <person name="Gustincich S."/>
            <person name="Harbers M."/>
            <person name="Hayashi Y."/>
            <person name="Hensch T.K."/>
            <person name="Hirokawa N."/>
            <person name="Hill D."/>
            <person name="Huminiecki L."/>
            <person name="Iacono M."/>
            <person name="Ikeo K."/>
            <person name="Iwama A."/>
            <person name="Ishikawa T."/>
            <person name="Jakt M."/>
            <person name="Kanapin A."/>
            <person name="Katoh M."/>
            <person name="Kawasawa Y."/>
            <person name="Kelso J."/>
            <person name="Kitamura H."/>
            <person name="Kitano H."/>
            <person name="Kollias G."/>
            <person name="Krishnan S.P."/>
            <person name="Kruger A."/>
            <person name="Kummerfeld S.K."/>
            <person name="Kurochkin I.V."/>
            <person name="Lareau L.F."/>
            <person name="Lazarevic D."/>
            <person name="Lipovich L."/>
            <person name="Liu J."/>
            <person name="Liuni S."/>
            <person name="McWilliam S."/>
            <person name="Madan Babu M."/>
            <person name="Madera M."/>
            <person name="Marchionni L."/>
            <person name="Matsuda H."/>
            <person name="Matsuzawa S."/>
            <person name="Miki H."/>
            <person name="Mignone F."/>
            <person name="Miyake S."/>
            <person name="Morris K."/>
            <person name="Mottagui-Tabar S."/>
            <person name="Mulder N."/>
            <person name="Nakano N."/>
            <person name="Nakauchi H."/>
            <person name="Ng P."/>
            <person name="Nilsson R."/>
            <person name="Nishiguchi S."/>
            <person name="Nishikawa S."/>
            <person name="Nori F."/>
            <person name="Ohara O."/>
            <person name="Okazaki Y."/>
            <person name="Orlando V."/>
            <person name="Pang K.C."/>
            <person name="Pavan W.J."/>
            <person name="Pavesi G."/>
            <person name="Pesole G."/>
            <person name="Petrovsky N."/>
            <person name="Piazza S."/>
            <person name="Reed J."/>
            <person name="Reid J.F."/>
            <person name="Ring B.Z."/>
            <person name="Ringwald M."/>
            <person name="Rost B."/>
            <person name="Ruan Y."/>
            <person name="Salzberg S.L."/>
            <person name="Sandelin A."/>
            <person name="Schneider C."/>
            <person name="Schoenbach C."/>
            <person name="Sekiguchi K."/>
            <person name="Semple C.A."/>
            <person name="Seno S."/>
            <person name="Sessa L."/>
            <person name="Sheng Y."/>
            <person name="Shibata Y."/>
            <person name="Shimada H."/>
            <person name="Shimada K."/>
            <person name="Silva D."/>
            <person name="Sinclair B."/>
            <person name="Sperling S."/>
            <person name="Stupka E."/>
            <person name="Sugiura K."/>
            <person name="Sultana R."/>
            <person name="Takenaka Y."/>
            <person name="Taki K."/>
            <person name="Tammoja K."/>
            <person name="Tan S.L."/>
            <person name="Tang S."/>
            <person name="Taylor M.S."/>
            <person name="Tegner J."/>
            <person name="Teichmann S.A."/>
            <person name="Ueda H.R."/>
            <person name="van Nimwegen E."/>
            <person name="Verardo R."/>
            <person name="Wei C.L."/>
            <person name="Yagi K."/>
            <person name="Yamanishi H."/>
            <person name="Zabarovsky E."/>
            <person name="Zhu S."/>
            <person name="Zimmer A."/>
            <person name="Hide W."/>
            <person name="Bult C."/>
            <person name="Grimmond S.M."/>
            <person name="Teasdale R.D."/>
            <person name="Liu E.T."/>
            <person name="Brusic V."/>
            <person name="Quackenbush J."/>
            <person name="Wahlestedt C."/>
            <person name="Mattick J.S."/>
            <person name="Hume D.A."/>
            <person name="Kai C."/>
            <person name="Sasaki D."/>
            <person name="Tomaru Y."/>
            <person name="Fukuda S."/>
            <person name="Kanamori-Katayama M."/>
            <person name="Suzuki M."/>
            <person name="Aoki J."/>
            <person name="Arakawa T."/>
            <person name="Iida J."/>
            <person name="Imamura K."/>
            <person name="Itoh M."/>
            <person name="Kato T."/>
            <person name="Kawaji H."/>
            <person name="Kawagashira N."/>
            <person name="Kawashima T."/>
            <person name="Kojima M."/>
            <person name="Kondo S."/>
            <person name="Konno H."/>
            <person name="Nakano K."/>
            <person name="Ninomiya N."/>
            <person name="Nishio T."/>
            <person name="Okada M."/>
            <person name="Plessy C."/>
            <person name="Shibata K."/>
            <person name="Shiraki T."/>
            <person name="Suzuki S."/>
            <person name="Tagami M."/>
            <person name="Waki K."/>
            <person name="Watahiki A."/>
            <person name="Okamura-Oho Y."/>
            <person name="Suzuki H."/>
            <person name="Kawai J."/>
            <person name="Hayashizaki Y."/>
        </authorList>
    </citation>
    <scope>NUCLEOTIDE SEQUENCE [LARGE SCALE MRNA] (ISOFORM 1)</scope>
    <source>
        <strain>C57BL/6J</strain>
        <tissue>Testis</tissue>
    </source>
</reference>
<reference key="4">
    <citation type="journal article" date="2009" name="PLoS Biol.">
        <title>Lineage-specific biology revealed by a finished genome assembly of the mouse.</title>
        <authorList>
            <person name="Church D.M."/>
            <person name="Goodstadt L."/>
            <person name="Hillier L.W."/>
            <person name="Zody M.C."/>
            <person name="Goldstein S."/>
            <person name="She X."/>
            <person name="Bult C.J."/>
            <person name="Agarwala R."/>
            <person name="Cherry J.L."/>
            <person name="DiCuccio M."/>
            <person name="Hlavina W."/>
            <person name="Kapustin Y."/>
            <person name="Meric P."/>
            <person name="Maglott D."/>
            <person name="Birtle Z."/>
            <person name="Marques A.C."/>
            <person name="Graves T."/>
            <person name="Zhou S."/>
            <person name="Teague B."/>
            <person name="Potamousis K."/>
            <person name="Churas C."/>
            <person name="Place M."/>
            <person name="Herschleb J."/>
            <person name="Runnheim R."/>
            <person name="Forrest D."/>
            <person name="Amos-Landgraf J."/>
            <person name="Schwartz D.C."/>
            <person name="Cheng Z."/>
            <person name="Lindblad-Toh K."/>
            <person name="Eichler E.E."/>
            <person name="Ponting C.P."/>
        </authorList>
    </citation>
    <scope>NUCLEOTIDE SEQUENCE [LARGE SCALE GENOMIC DNA]</scope>
    <source>
        <strain>C57BL/6J</strain>
    </source>
</reference>
<reference key="5">
    <citation type="journal article" date="2004" name="Genome Res.">
        <title>The status, quality, and expansion of the NIH full-length cDNA project: the Mammalian Gene Collection (MGC).</title>
        <authorList>
            <consortium name="The MGC Project Team"/>
        </authorList>
    </citation>
    <scope>NUCLEOTIDE SEQUENCE [LARGE SCALE MRNA] (ISOFORM 2)</scope>
</reference>
<reference key="6">
    <citation type="journal article" date="2007" name="Mol. Cell. Biol.">
        <title>Abnormal sperm in mice lacking the Taf7l gene.</title>
        <authorList>
            <person name="Cheng Y."/>
            <person name="Buffone M.G."/>
            <person name="Kouadio M."/>
            <person name="Goodheart M."/>
            <person name="Page D.C."/>
            <person name="Gerton G.L."/>
            <person name="Davidson I."/>
            <person name="Wang P.J."/>
        </authorList>
    </citation>
    <scope>TISSUE SPECIFICITY</scope>
    <scope>DISRUPTION PHENOTYPE</scope>
</reference>
<reference key="7">
    <citation type="journal article" date="2010" name="Cell">
        <title>A tissue-specific atlas of mouse protein phosphorylation and expression.</title>
        <authorList>
            <person name="Huttlin E.L."/>
            <person name="Jedrychowski M.P."/>
            <person name="Elias J.E."/>
            <person name="Goswami T."/>
            <person name="Rad R."/>
            <person name="Beausoleil S.A."/>
            <person name="Villen J."/>
            <person name="Haas W."/>
            <person name="Sowa M.E."/>
            <person name="Gygi S.P."/>
        </authorList>
    </citation>
    <scope>PHOSPHORYLATION [LARGE SCALE ANALYSIS] AT SER-199</scope>
    <scope>IDENTIFICATION BY MASS SPECTROMETRY [LARGE SCALE ANALYSIS]</scope>
    <source>
        <tissue>Testis</tissue>
    </source>
</reference>
<reference key="8">
    <citation type="journal article" date="2022" name="Biol. Reprod.">
        <title>Genetic characterization of a missense mutation in the X-linked TAF7L gene identified in an oligozoospermic man.</title>
        <authorList>
            <person name="Ling L."/>
            <person name="Li F."/>
            <person name="Yang P."/>
            <person name="Oates R.D."/>
            <person name="Silber S."/>
            <person name="Kurischko C."/>
            <person name="Luca F.C."/>
            <person name="Leu N.A."/>
            <person name="Zhang J."/>
            <person name="Yue Q."/>
            <person name="Skaletsky H."/>
            <person name="Brown L.G."/>
            <person name="Rozen S."/>
            <person name="Page D.C."/>
            <person name="Wang P.J."/>
            <person name="Zheng K."/>
        </authorList>
    </citation>
    <scope>MUTAGENESIS OF ASP-144</scope>
    <scope>INTERACTION WITH TBP</scope>
</reference>
<proteinExistence type="evidence at protein level"/>
<dbReference type="EMBL" id="AF285574">
    <property type="protein sequence ID" value="AAK31953.1"/>
    <property type="molecule type" value="mRNA"/>
</dbReference>
<dbReference type="EMBL" id="AK017109">
    <property type="protein sequence ID" value="BAB30600.1"/>
    <property type="molecule type" value="mRNA"/>
</dbReference>
<dbReference type="EMBL" id="AL672064">
    <property type="status" value="NOT_ANNOTATED_CDS"/>
    <property type="molecule type" value="Genomic_DNA"/>
</dbReference>
<dbReference type="EMBL" id="BC106854">
    <property type="protein sequence ID" value="AAI06855.1"/>
    <property type="molecule type" value="mRNA"/>
</dbReference>
<dbReference type="CCDS" id="CCDS53184.1">
    <molecule id="Q9D3R9-1"/>
</dbReference>
<dbReference type="RefSeq" id="NP_083234.2">
    <molecule id="Q9D3R9-1"/>
    <property type="nucleotide sequence ID" value="NM_028958.4"/>
</dbReference>
<dbReference type="SMR" id="Q9D3R9"/>
<dbReference type="BioGRID" id="216775">
    <property type="interactions" value="4"/>
</dbReference>
<dbReference type="CORUM" id="Q9D3R9"/>
<dbReference type="FunCoup" id="Q9D3R9">
    <property type="interactions" value="224"/>
</dbReference>
<dbReference type="STRING" id="10090.ENSMUSP00000009740"/>
<dbReference type="GlyGen" id="Q9D3R9">
    <property type="glycosylation" value="2 sites"/>
</dbReference>
<dbReference type="iPTMnet" id="Q9D3R9"/>
<dbReference type="PhosphoSitePlus" id="Q9D3R9"/>
<dbReference type="SwissPalm" id="Q9D3R9"/>
<dbReference type="PaxDb" id="10090-ENSMUSP00000009740"/>
<dbReference type="ProteomicsDB" id="254853">
    <molecule id="Q9D3R9-1"/>
</dbReference>
<dbReference type="ProteomicsDB" id="254854">
    <molecule id="Q9D3R9-2"/>
</dbReference>
<dbReference type="DNASU" id="74469"/>
<dbReference type="Ensembl" id="ENSMUST00000009740.9">
    <molecule id="Q9D3R9-1"/>
    <property type="protein sequence ID" value="ENSMUSP00000009740.3"/>
    <property type="gene ID" value="ENSMUSG00000009596.10"/>
</dbReference>
<dbReference type="GeneID" id="74469"/>
<dbReference type="KEGG" id="mmu:74469"/>
<dbReference type="UCSC" id="uc009ugc.2">
    <molecule id="Q9D3R9-1"/>
    <property type="organism name" value="mouse"/>
</dbReference>
<dbReference type="AGR" id="MGI:1921719"/>
<dbReference type="CTD" id="54457"/>
<dbReference type="MGI" id="MGI:1921719">
    <property type="gene designation" value="Taf7l"/>
</dbReference>
<dbReference type="VEuPathDB" id="HostDB:ENSMUSG00000009596"/>
<dbReference type="eggNOG" id="KOG4011">
    <property type="taxonomic scope" value="Eukaryota"/>
</dbReference>
<dbReference type="GeneTree" id="ENSGT00940000161565"/>
<dbReference type="HOGENOM" id="CLU_037860_0_0_1"/>
<dbReference type="InParanoid" id="Q9D3R9"/>
<dbReference type="OMA" id="VSETNCE"/>
<dbReference type="OrthoDB" id="153872at2759"/>
<dbReference type="PhylomeDB" id="Q9D3R9"/>
<dbReference type="TreeFam" id="TF313044"/>
<dbReference type="BioGRID-ORCS" id="74469">
    <property type="hits" value="4 hits in 78 CRISPR screens"/>
</dbReference>
<dbReference type="ChiTaRS" id="Taf7l">
    <property type="organism name" value="mouse"/>
</dbReference>
<dbReference type="PRO" id="PR:Q9D3R9"/>
<dbReference type="Proteomes" id="UP000000589">
    <property type="component" value="Chromosome X"/>
</dbReference>
<dbReference type="RNAct" id="Q9D3R9">
    <property type="molecule type" value="protein"/>
</dbReference>
<dbReference type="Bgee" id="ENSMUSG00000009596">
    <property type="expression patterns" value="Expressed in placenta labyrinth and 20 other cell types or tissues"/>
</dbReference>
<dbReference type="ExpressionAtlas" id="Q9D3R9">
    <property type="expression patterns" value="baseline and differential"/>
</dbReference>
<dbReference type="GO" id="GO:0005737">
    <property type="term" value="C:cytoplasm"/>
    <property type="evidence" value="ECO:0000314"/>
    <property type="project" value="MGI"/>
</dbReference>
<dbReference type="GO" id="GO:0001673">
    <property type="term" value="C:male germ cell nucleus"/>
    <property type="evidence" value="ECO:0000314"/>
    <property type="project" value="MGI"/>
</dbReference>
<dbReference type="GO" id="GO:0005634">
    <property type="term" value="C:nucleus"/>
    <property type="evidence" value="ECO:0000314"/>
    <property type="project" value="MGI"/>
</dbReference>
<dbReference type="GO" id="GO:0005669">
    <property type="term" value="C:transcription factor TFIID complex"/>
    <property type="evidence" value="ECO:0007669"/>
    <property type="project" value="InterPro"/>
</dbReference>
<dbReference type="GO" id="GO:0030317">
    <property type="term" value="P:flagellated sperm motility"/>
    <property type="evidence" value="ECO:0000315"/>
    <property type="project" value="MGI"/>
</dbReference>
<dbReference type="GO" id="GO:0007286">
    <property type="term" value="P:spermatid development"/>
    <property type="evidence" value="ECO:0000315"/>
    <property type="project" value="MGI"/>
</dbReference>
<dbReference type="GO" id="GO:0006367">
    <property type="term" value="P:transcription initiation at RNA polymerase II promoter"/>
    <property type="evidence" value="ECO:0007669"/>
    <property type="project" value="InterPro"/>
</dbReference>
<dbReference type="CDD" id="cd08047">
    <property type="entry name" value="TAF7"/>
    <property type="match status" value="1"/>
</dbReference>
<dbReference type="InterPro" id="IPR037817">
    <property type="entry name" value="TAF7"/>
</dbReference>
<dbReference type="InterPro" id="IPR006751">
    <property type="entry name" value="TAFII55_prot_cons_reg"/>
</dbReference>
<dbReference type="PANTHER" id="PTHR12228">
    <property type="entry name" value="TRANSCRIPTION INITIATION FACTOR TFIID 55 KD SUBUNIT-RELATED"/>
    <property type="match status" value="1"/>
</dbReference>
<dbReference type="PANTHER" id="PTHR12228:SF16">
    <property type="entry name" value="TRANSCRIPTION INITIATION FACTOR TFIID SUBUNIT 7-LIKE"/>
    <property type="match status" value="1"/>
</dbReference>
<dbReference type="Pfam" id="PF04658">
    <property type="entry name" value="TAFII55_N"/>
    <property type="match status" value="1"/>
</dbReference>
<dbReference type="SMART" id="SM01370">
    <property type="entry name" value="TAFII55_N"/>
    <property type="match status" value="1"/>
</dbReference>
<evidence type="ECO:0000255" key="1"/>
<evidence type="ECO:0000256" key="2">
    <source>
        <dbReference type="SAM" id="MobiDB-lite"/>
    </source>
</evidence>
<evidence type="ECO:0000269" key="3">
    <source>
    </source>
</evidence>
<evidence type="ECO:0000269" key="4">
    <source>
    </source>
</evidence>
<evidence type="ECO:0000269" key="5">
    <source>
    </source>
</evidence>
<evidence type="ECO:0000269" key="6">
    <source>
    </source>
</evidence>
<evidence type="ECO:0000303" key="7">
    <source>
    </source>
</evidence>
<evidence type="ECO:0000303" key="8">
    <source>
    </source>
</evidence>
<evidence type="ECO:0000305" key="9"/>
<evidence type="ECO:0007744" key="10">
    <source>
    </source>
</evidence>
<accession>Q9D3R9</accession>
<accession>A2AFB9</accession>
<accession>Q99MW7</accession>